<organism>
    <name type="scientific">Rattus norvegicus</name>
    <name type="common">Rat</name>
    <dbReference type="NCBI Taxonomy" id="10116"/>
    <lineage>
        <taxon>Eukaryota</taxon>
        <taxon>Metazoa</taxon>
        <taxon>Chordata</taxon>
        <taxon>Craniata</taxon>
        <taxon>Vertebrata</taxon>
        <taxon>Euteleostomi</taxon>
        <taxon>Mammalia</taxon>
        <taxon>Eutheria</taxon>
        <taxon>Euarchontoglires</taxon>
        <taxon>Glires</taxon>
        <taxon>Rodentia</taxon>
        <taxon>Myomorpha</taxon>
        <taxon>Muroidea</taxon>
        <taxon>Muridae</taxon>
        <taxon>Murinae</taxon>
        <taxon>Rattus</taxon>
    </lineage>
</organism>
<sequence>MDNYPKLEEMMLLSNGAPQFLGAAGTPEGSGGNNSSSSSSSSSGGGGGGGSNSGSSAFNPQGEPSEQPYEHLTTESFSDIALNNEKALVETSYPSQTTRLPPITYTGRFSLEPAPNSGNTLWPEPLFSLVSGLVSMTNPPTSSSSAPSPAASSSSSASQSPPLSCAVPSNDSSPIYSAAPTFPTPNTDIFPEPQSQAFPGSAGTALQYPPPAYPATKGGFQVPMIPDYLFPQQQGDLSLGTPDQKPFQGLENRTQQPSLTPLSTIKAFATQSGSQDLKALNNTYQSQLIKPSRMRKYPNRPSKTPPHERPYACPVESCDRRFSRSDELTRHIRIHTGQKPFQCRICMRNFSRSDHLTTHIRTHTGEKPFACDICGRKFARSDERKRHTKIHLRQKDKKADKSVVASSAASSLSSYPSPVATSYPSPATTSFPSPVPTSYSSPGSSTYPSPAHSGFPSPSVATTYASVPPAFPAQVSTFQSAGVSNSFSTSTGLSDMTATFSPRTIEIC</sequence>
<feature type="chain" id="PRO_0000047111" description="Early growth response protein 1">
    <location>
        <begin position="1"/>
        <end position="508"/>
    </location>
</feature>
<feature type="repeat" description="1">
    <location>
        <begin position="413"/>
        <end position="420"/>
    </location>
</feature>
<feature type="repeat" description="2">
    <location>
        <begin position="421"/>
        <end position="428"/>
    </location>
</feature>
<feature type="repeat" description="3">
    <location>
        <begin position="429"/>
        <end position="436"/>
    </location>
</feature>
<feature type="repeat" description="4">
    <location>
        <begin position="437"/>
        <end position="444"/>
    </location>
</feature>
<feature type="repeat" description="5">
    <location>
        <begin position="445"/>
        <end position="452"/>
    </location>
</feature>
<feature type="repeat" description="6">
    <location>
        <begin position="453"/>
        <end position="460"/>
    </location>
</feature>
<feature type="repeat" description="7">
    <location>
        <begin position="462"/>
        <end position="468"/>
    </location>
</feature>
<feature type="zinc finger region" description="C2H2-type 1" evidence="3">
    <location>
        <begin position="311"/>
        <end position="335"/>
    </location>
</feature>
<feature type="zinc finger region" description="C2H2-type 2" evidence="3">
    <location>
        <begin position="341"/>
        <end position="363"/>
    </location>
</feature>
<feature type="zinc finger region" description="C2H2-type 3" evidence="3">
    <location>
        <begin position="369"/>
        <end position="391"/>
    </location>
</feature>
<feature type="region of interest" description="Disordered" evidence="4">
    <location>
        <begin position="18"/>
        <end position="78"/>
    </location>
</feature>
<feature type="region of interest" description="Disordered" evidence="4">
    <location>
        <begin position="136"/>
        <end position="210"/>
    </location>
</feature>
<feature type="region of interest" description="Disordered" evidence="4">
    <location>
        <begin position="292"/>
        <end position="311"/>
    </location>
</feature>
<feature type="region of interest" description="Disordered" evidence="4">
    <location>
        <begin position="382"/>
        <end position="453"/>
    </location>
</feature>
<feature type="region of interest" description="7 X 8 AA tandem repeats of [TS](2)-[FY]-[PS]-S-P-[GSAV]-X">
    <location>
        <begin position="413"/>
        <end position="468"/>
    </location>
</feature>
<feature type="compositionally biased region" description="Low complexity" evidence="4">
    <location>
        <begin position="33"/>
        <end position="42"/>
    </location>
</feature>
<feature type="compositionally biased region" description="Gly residues" evidence="4">
    <location>
        <begin position="43"/>
        <end position="52"/>
    </location>
</feature>
<feature type="compositionally biased region" description="Low complexity" evidence="4">
    <location>
        <begin position="139"/>
        <end position="164"/>
    </location>
</feature>
<feature type="compositionally biased region" description="Basic residues" evidence="4">
    <location>
        <begin position="386"/>
        <end position="396"/>
    </location>
</feature>
<feature type="compositionally biased region" description="Low complexity" evidence="4">
    <location>
        <begin position="402"/>
        <end position="450"/>
    </location>
</feature>
<feature type="site" description="Interaction with DNA" evidence="2">
    <location>
        <position position="309"/>
    </location>
</feature>
<feature type="site" description="Interaction with DNA" evidence="1">
    <location>
        <position position="320"/>
    </location>
</feature>
<feature type="site" description="Interaction with DNA" evidence="1">
    <location>
        <position position="324"/>
    </location>
</feature>
<feature type="site" description="Interaction with DNA" evidence="2">
    <location>
        <position position="330"/>
    </location>
</feature>
<feature type="site" description="Interaction with DNA" evidence="1">
    <location>
        <position position="348"/>
    </location>
</feature>
<feature type="site" description="Interaction with DNA" evidence="2">
    <location>
        <position position="352"/>
    </location>
</feature>
<feature type="site" description="Interaction with DNA" evidence="2">
    <location>
        <position position="376"/>
    </location>
</feature>
<feature type="site" description="Interaction with DNA" evidence="2">
    <location>
        <position position="380"/>
    </location>
</feature>
<feature type="site" description="Interaction with DNA" evidence="2">
    <location>
        <position position="386"/>
    </location>
</feature>
<feature type="cross-link" description="Glycyl lysine isopeptide (Lys-Gly) (interchain with G-Cter in SUMO2)" evidence="2">
    <location>
        <position position="278"/>
    </location>
</feature>
<feature type="mutagenesis site" description="Increases transcriptional activity." evidence="7">
    <original>I</original>
    <variation>F</variation>
    <location>
        <position position="265"/>
    </location>
</feature>
<comment type="function">
    <text evidence="1 2 7">Transcriptional regulator (PubMed:8413279). Recognizes and binds to the DNA sequence 5'-GCG(T/G)GGGCG-3'(EGR-site) in the promoter region of target genes (PubMed:15220929). Binds double-stranded target DNA, irrespective of the cytosine methylation status (By similarity). Regulates the transcription of numerous target genes, and thereby plays an important role in regulating the response to growth factors, DNA damage, and ischemia. Plays a role in the regulation of cell survival, proliferation and cell death. Activates expression of p53/TP53 and TGFB1, and thereby helps prevent tumor formation. Required for normal progress through mitosis and normal proliferation of hepatocytes after partial hepatectomy. Mediates responses to ischemia and hypoxia; regulates the expression of proteins such as IL1B and CXCL2 that are involved in inflammatory processes and development of tissue damage after ischemia. Regulates biosynthesis of luteinizing hormone (LHB) in the pituitary (By similarity). Regulates the amplitude of the expression rhythms of clock genes: BMAL1, PER2 and NR1D1 in the liver via the activation of PER1 (clock repressor) transcription. Regulates the rhythmic expression of core-clock gene BMAL1 in the suprachiasmatic nucleus (SCN) (By similarity). Regulates biosynthesis of glucocorticoid receptor GR/NR3C1 in the hippocampus and thereby may play a role in the behavioral and hypothalamic-pituitary-adrenal responses to stress in offspring (PubMed:15220929).</text>
</comment>
<comment type="subunit">
    <text evidence="2">Interacts with SNAI1 and SP1 upon 12-O-tetradecanoylphorbol-13-acetate (TPA) induction.</text>
</comment>
<comment type="subcellular location">
    <subcellularLocation>
        <location evidence="5">Nucleus</location>
    </subcellularLocation>
    <subcellularLocation>
        <location evidence="2">Cytoplasm</location>
    </subcellularLocation>
</comment>
<comment type="tissue specificity">
    <text evidence="5">Detected in kidney thick ascending limbs and collecting ducts (at protein level).</text>
</comment>
<comment type="induction">
    <text evidence="5 6">By growth factors (PubMed:2492104). Rapidly and transiently up-regulated in response to ischemia (PubMed:1859855).</text>
</comment>
<comment type="domain">
    <text evidence="2">Binds to DNA motifs with the sequence 5'-GCG(T/G)GGGCG-3' via its C2H2-type zinc fingers. The first, most N-terminal zinc finger binds to the 3'-GCG motif, the middle zinc finger interacts with the central TGG motif, and the C-terminal zinc finger binds to the 5'-GCG motif. Binds double-stranded target DNA, irrespective of the cytosine methylation status. Has reduced affinity for target DNA where the cytosines have been oxidized to 5-hydroxymethylcytosine. Does not bind target DNA where the cytosines have been oxidized to 5-formylcytosine or 5-carboxylcytosine.</text>
</comment>
<comment type="similarity">
    <text evidence="9">Belongs to the EGR C2H2-type zinc-finger protein family.</text>
</comment>
<proteinExistence type="evidence at protein level"/>
<evidence type="ECO:0000250" key="1">
    <source>
        <dbReference type="UniProtKB" id="P08046"/>
    </source>
</evidence>
<evidence type="ECO:0000250" key="2">
    <source>
        <dbReference type="UniProtKB" id="P18146"/>
    </source>
</evidence>
<evidence type="ECO:0000255" key="3">
    <source>
        <dbReference type="PROSITE-ProRule" id="PRU00042"/>
    </source>
</evidence>
<evidence type="ECO:0000256" key="4">
    <source>
        <dbReference type="SAM" id="MobiDB-lite"/>
    </source>
</evidence>
<evidence type="ECO:0000269" key="5">
    <source>
    </source>
</evidence>
<evidence type="ECO:0000269" key="6">
    <source>
    </source>
</evidence>
<evidence type="ECO:0000269" key="7">
    <source>
    </source>
</evidence>
<evidence type="ECO:0000303" key="8">
    <source>
    </source>
</evidence>
<evidence type="ECO:0000305" key="9"/>
<keyword id="KW-0010">Activator</keyword>
<keyword id="KW-0090">Biological rhythms</keyword>
<keyword id="KW-0963">Cytoplasm</keyword>
<keyword id="KW-0238">DNA-binding</keyword>
<keyword id="KW-1017">Isopeptide bond</keyword>
<keyword id="KW-0479">Metal-binding</keyword>
<keyword id="KW-0539">Nucleus</keyword>
<keyword id="KW-1185">Reference proteome</keyword>
<keyword id="KW-0677">Repeat</keyword>
<keyword id="KW-0804">Transcription</keyword>
<keyword id="KW-0805">Transcription regulation</keyword>
<keyword id="KW-0832">Ubl conjugation</keyword>
<keyword id="KW-0862">Zinc</keyword>
<keyword id="KW-0863">Zinc-finger</keyword>
<reference key="1">
    <citation type="journal article" date="1987" name="Science">
        <title>A nerve growth factor-induced gene encodes a possible transcriptional regulatory factor.</title>
        <authorList>
            <person name="Milbrandt J."/>
        </authorList>
    </citation>
    <scope>NUCLEOTIDE SEQUENCE [MRNA]</scope>
</reference>
<reference key="2">
    <citation type="journal article" date="1989" name="Proc. Natl. Acad. Sci. U.S.A.">
        <title>Structure of the NGFI-A gene and detection of upstream sequences responsible for its transcriptional induction by nerve growth factor.</title>
        <authorList>
            <person name="Changelian P.S."/>
            <person name="Feng P."/>
            <person name="King T.C."/>
            <person name="Milbrandt J."/>
        </authorList>
    </citation>
    <scope>NUCLEOTIDE SEQUENCE [GENOMIC DNA]</scope>
    <scope>INDUCTION BY GROWTH FACTORS</scope>
</reference>
<reference key="3">
    <citation type="submission" date="2004-02" db="EMBL/GenBank/DDBJ databases">
        <title>Cloning and sequencing of cDNA encoding EGR1 from rat.</title>
        <authorList>
            <person name="Ju S.K."/>
        </authorList>
    </citation>
    <scope>NUCLEOTIDE SEQUENCE [MRNA]</scope>
    <source>
        <strain>Sprague-Dawley</strain>
        <tissue>Midbrain</tissue>
    </source>
</reference>
<reference key="4">
    <citation type="journal article" date="1991" name="Cell Regul.">
        <title>Localization of the protein product of the immediate early growth response gene, Egr-1, in the kidney after ischemia and reperfusion.</title>
        <authorList>
            <person name="Bonventre J.V."/>
            <person name="Sukhatme V.P."/>
            <person name="Bamberger M."/>
            <person name="Ouellette A.J."/>
            <person name="Brown D."/>
        </authorList>
    </citation>
    <scope>SUBCELLULAR LOCATION</scope>
    <scope>TISSUE SPECIFICITY</scope>
    <scope>INDUCTION BY ISCHEMIA</scope>
</reference>
<reference key="5">
    <citation type="journal article" date="1993" name="Mol. Cell. Biol.">
        <title>Transcriptional activity of the zinc finger protein NGFI-A is influenced by its interaction with a cellular factor.</title>
        <authorList>
            <person name="Russo M.W."/>
            <person name="Matheny C."/>
            <person name="Milbrandt J."/>
        </authorList>
    </citation>
    <scope>FUNCTION</scope>
    <scope>MUTAGENESIS OF ILE-265</scope>
</reference>
<reference key="6">
    <citation type="journal article" date="2004" name="Nat. Neurosci.">
        <title>Epigenetic programming by maternal behavior.</title>
        <authorList>
            <person name="Weaver I.C."/>
            <person name="Cervoni N."/>
            <person name="Champagne F.A."/>
            <person name="D'Alessio A.C."/>
            <person name="Sharma S."/>
            <person name="Seckl J.R."/>
            <person name="Dymov S."/>
            <person name="Szyf M."/>
            <person name="Meaney M.J."/>
        </authorList>
    </citation>
    <scope>FUNCTION</scope>
</reference>
<protein>
    <recommendedName>
        <fullName>Early growth response protein 1</fullName>
        <shortName>EGR-1</shortName>
    </recommendedName>
    <alternativeName>
        <fullName evidence="8">Nerve growth factor-induced protein A</fullName>
        <shortName evidence="8">NGFI-A</shortName>
    </alternativeName>
    <alternativeName>
        <fullName>Transcription factor Zif268</fullName>
    </alternativeName>
    <alternativeName>
        <fullName>Zinc finger protein Krox-24</fullName>
    </alternativeName>
</protein>
<dbReference type="EMBL" id="M18416">
    <property type="protein sequence ID" value="AAA61927.1"/>
    <property type="molecule type" value="mRNA"/>
</dbReference>
<dbReference type="EMBL" id="J04154">
    <property type="protein sequence ID" value="AAA60740.1"/>
    <property type="molecule type" value="Genomic_DNA"/>
</dbReference>
<dbReference type="EMBL" id="AY551092">
    <property type="protein sequence ID" value="AAS58455.1"/>
    <property type="molecule type" value="mRNA"/>
</dbReference>
<dbReference type="PIR" id="A32225">
    <property type="entry name" value="A32225"/>
</dbReference>
<dbReference type="RefSeq" id="NP_036683.1">
    <property type="nucleotide sequence ID" value="NM_012551.2"/>
</dbReference>
<dbReference type="SMR" id="P08154"/>
<dbReference type="FunCoup" id="P08154">
    <property type="interactions" value="400"/>
</dbReference>
<dbReference type="STRING" id="10116.ENSRNOP00000026303"/>
<dbReference type="PhosphoSitePlus" id="P08154"/>
<dbReference type="PaxDb" id="10116-ENSRNOP00000026303"/>
<dbReference type="GeneID" id="24330"/>
<dbReference type="KEGG" id="rno:24330"/>
<dbReference type="UCSC" id="RGD:2544">
    <property type="organism name" value="rat"/>
</dbReference>
<dbReference type="AGR" id="RGD:2544"/>
<dbReference type="CTD" id="1958"/>
<dbReference type="RGD" id="2544">
    <property type="gene designation" value="Egr1"/>
</dbReference>
<dbReference type="eggNOG" id="KOG1721">
    <property type="taxonomic scope" value="Eukaryota"/>
</dbReference>
<dbReference type="HOGENOM" id="CLU_043235_2_0_1"/>
<dbReference type="InParanoid" id="P08154"/>
<dbReference type="PhylomeDB" id="P08154"/>
<dbReference type="PRO" id="PR:P08154"/>
<dbReference type="Proteomes" id="UP000002494">
    <property type="component" value="Unplaced"/>
</dbReference>
<dbReference type="GO" id="GO:0000785">
    <property type="term" value="C:chromatin"/>
    <property type="evidence" value="ECO:0000266"/>
    <property type="project" value="RGD"/>
</dbReference>
<dbReference type="GO" id="GO:0005737">
    <property type="term" value="C:cytoplasm"/>
    <property type="evidence" value="ECO:0000314"/>
    <property type="project" value="UniProtKB"/>
</dbReference>
<dbReference type="GO" id="GO:0005654">
    <property type="term" value="C:nucleoplasm"/>
    <property type="evidence" value="ECO:0000304"/>
    <property type="project" value="Reactome"/>
</dbReference>
<dbReference type="GO" id="GO:0005634">
    <property type="term" value="C:nucleus"/>
    <property type="evidence" value="ECO:0000314"/>
    <property type="project" value="UniProtKB"/>
</dbReference>
<dbReference type="GO" id="GO:0003677">
    <property type="term" value="F:DNA binding"/>
    <property type="evidence" value="ECO:0000266"/>
    <property type="project" value="RGD"/>
</dbReference>
<dbReference type="GO" id="GO:0001228">
    <property type="term" value="F:DNA-binding transcription activator activity, RNA polymerase II-specific"/>
    <property type="evidence" value="ECO:0000314"/>
    <property type="project" value="RGD"/>
</dbReference>
<dbReference type="GO" id="GO:0003700">
    <property type="term" value="F:DNA-binding transcription factor activity"/>
    <property type="evidence" value="ECO:0000315"/>
    <property type="project" value="RGD"/>
</dbReference>
<dbReference type="GO" id="GO:0000981">
    <property type="term" value="F:DNA-binding transcription factor activity, RNA polymerase II-specific"/>
    <property type="evidence" value="ECO:0000318"/>
    <property type="project" value="GO_Central"/>
</dbReference>
<dbReference type="GO" id="GO:0003690">
    <property type="term" value="F:double-stranded DNA binding"/>
    <property type="evidence" value="ECO:0000314"/>
    <property type="project" value="RGD"/>
</dbReference>
<dbReference type="GO" id="GO:0010385">
    <property type="term" value="F:double-stranded methylated DNA binding"/>
    <property type="evidence" value="ECO:0000266"/>
    <property type="project" value="RGD"/>
</dbReference>
<dbReference type="GO" id="GO:0019899">
    <property type="term" value="F:enzyme binding"/>
    <property type="evidence" value="ECO:0000266"/>
    <property type="project" value="RGD"/>
</dbReference>
<dbReference type="GO" id="GO:0044729">
    <property type="term" value="F:hemi-methylated DNA-binding"/>
    <property type="evidence" value="ECO:0000266"/>
    <property type="project" value="RGD"/>
</dbReference>
<dbReference type="GO" id="GO:0035035">
    <property type="term" value="F:histone acetyltransferase binding"/>
    <property type="evidence" value="ECO:0000266"/>
    <property type="project" value="RGD"/>
</dbReference>
<dbReference type="GO" id="GO:1990841">
    <property type="term" value="F:promoter-specific chromatin binding"/>
    <property type="evidence" value="ECO:0000314"/>
    <property type="project" value="RGD"/>
</dbReference>
<dbReference type="GO" id="GO:0000978">
    <property type="term" value="F:RNA polymerase II cis-regulatory region sequence-specific DNA binding"/>
    <property type="evidence" value="ECO:0000314"/>
    <property type="project" value="UniProtKB"/>
</dbReference>
<dbReference type="GO" id="GO:0000979">
    <property type="term" value="F:RNA polymerase II core promoter sequence-specific DNA binding"/>
    <property type="evidence" value="ECO:0000314"/>
    <property type="project" value="RGD"/>
</dbReference>
<dbReference type="GO" id="GO:0000977">
    <property type="term" value="F:RNA polymerase II transcription regulatory region sequence-specific DNA binding"/>
    <property type="evidence" value="ECO:0000314"/>
    <property type="project" value="RGD"/>
</dbReference>
<dbReference type="GO" id="GO:0043565">
    <property type="term" value="F:sequence-specific DNA binding"/>
    <property type="evidence" value="ECO:0000314"/>
    <property type="project" value="RGD"/>
</dbReference>
<dbReference type="GO" id="GO:1990837">
    <property type="term" value="F:sequence-specific double-stranded DNA binding"/>
    <property type="evidence" value="ECO:0000266"/>
    <property type="project" value="RGD"/>
</dbReference>
<dbReference type="GO" id="GO:0000976">
    <property type="term" value="F:transcription cis-regulatory region binding"/>
    <property type="evidence" value="ECO:0000266"/>
    <property type="project" value="RGD"/>
</dbReference>
<dbReference type="GO" id="GO:0008270">
    <property type="term" value="F:zinc ion binding"/>
    <property type="evidence" value="ECO:0000266"/>
    <property type="project" value="RGD"/>
</dbReference>
<dbReference type="GO" id="GO:0030509">
    <property type="term" value="P:BMP signaling pathway"/>
    <property type="evidence" value="ECO:0000266"/>
    <property type="project" value="RGD"/>
</dbReference>
<dbReference type="GO" id="GO:0071236">
    <property type="term" value="P:cellular response to antibiotic"/>
    <property type="evidence" value="ECO:0000270"/>
    <property type="project" value="RGD"/>
</dbReference>
<dbReference type="GO" id="GO:0071320">
    <property type="term" value="P:cellular response to cAMP"/>
    <property type="evidence" value="ECO:0000270"/>
    <property type="project" value="RGD"/>
</dbReference>
<dbReference type="GO" id="GO:0071372">
    <property type="term" value="P:cellular response to follicle-stimulating hormone stimulus"/>
    <property type="evidence" value="ECO:0000270"/>
    <property type="project" value="RGD"/>
</dbReference>
<dbReference type="GO" id="GO:0071480">
    <property type="term" value="P:cellular response to gamma radiation"/>
    <property type="evidence" value="ECO:0000266"/>
    <property type="project" value="RGD"/>
</dbReference>
<dbReference type="GO" id="GO:0071371">
    <property type="term" value="P:cellular response to gonadotropin stimulus"/>
    <property type="evidence" value="ECO:0000270"/>
    <property type="project" value="RGD"/>
</dbReference>
<dbReference type="GO" id="GO:0071363">
    <property type="term" value="P:cellular response to growth factor stimulus"/>
    <property type="evidence" value="ECO:0000270"/>
    <property type="project" value="RGD"/>
</dbReference>
<dbReference type="GO" id="GO:0071504">
    <property type="term" value="P:cellular response to heparin"/>
    <property type="evidence" value="ECO:0000314"/>
    <property type="project" value="UniProtKB"/>
</dbReference>
<dbReference type="GO" id="GO:0071455">
    <property type="term" value="P:cellular response to hyperoxia"/>
    <property type="evidence" value="ECO:0000270"/>
    <property type="project" value="RGD"/>
</dbReference>
<dbReference type="GO" id="GO:0071456">
    <property type="term" value="P:cellular response to hypoxia"/>
    <property type="evidence" value="ECO:0000270"/>
    <property type="project" value="RGD"/>
</dbReference>
<dbReference type="GO" id="GO:0032869">
    <property type="term" value="P:cellular response to insulin stimulus"/>
    <property type="evidence" value="ECO:0000270"/>
    <property type="project" value="RGD"/>
</dbReference>
<dbReference type="GO" id="GO:0098759">
    <property type="term" value="P:cellular response to interleukin-8"/>
    <property type="evidence" value="ECO:0000250"/>
    <property type="project" value="UniProtKB"/>
</dbReference>
<dbReference type="GO" id="GO:0071317">
    <property type="term" value="P:cellular response to isoquinoline alkaloid"/>
    <property type="evidence" value="ECO:0000270"/>
    <property type="project" value="RGD"/>
</dbReference>
<dbReference type="GO" id="GO:0071260">
    <property type="term" value="P:cellular response to mechanical stimulus"/>
    <property type="evidence" value="ECO:0000270"/>
    <property type="project" value="RGD"/>
</dbReference>
<dbReference type="GO" id="GO:0071506">
    <property type="term" value="P:cellular response to mycophenolic acid"/>
    <property type="evidence" value="ECO:0000314"/>
    <property type="project" value="UniProtKB"/>
</dbReference>
<dbReference type="GO" id="GO:0071383">
    <property type="term" value="P:cellular response to steroid hormone stimulus"/>
    <property type="evidence" value="ECO:0000270"/>
    <property type="project" value="RGD"/>
</dbReference>
<dbReference type="GO" id="GO:0071466">
    <property type="term" value="P:cellular response to xenobiotic stimulus"/>
    <property type="evidence" value="ECO:0000270"/>
    <property type="project" value="RGD"/>
</dbReference>
<dbReference type="GO" id="GO:0032922">
    <property type="term" value="P:circadian regulation of gene expression"/>
    <property type="evidence" value="ECO:0000250"/>
    <property type="project" value="UniProtKB"/>
</dbReference>
<dbReference type="GO" id="GO:0007623">
    <property type="term" value="P:circadian rhythm"/>
    <property type="evidence" value="ECO:0000270"/>
    <property type="project" value="RGD"/>
</dbReference>
<dbReference type="GO" id="GO:0060086">
    <property type="term" value="P:circadian temperature homeostasis"/>
    <property type="evidence" value="ECO:0000250"/>
    <property type="project" value="UniProtKB"/>
</dbReference>
<dbReference type="GO" id="GO:0044849">
    <property type="term" value="P:estrous cycle"/>
    <property type="evidence" value="ECO:0000250"/>
    <property type="project" value="UniProtKB"/>
</dbReference>
<dbReference type="GO" id="GO:0072110">
    <property type="term" value="P:glomerular mesangial cell proliferation"/>
    <property type="evidence" value="ECO:0000315"/>
    <property type="project" value="UniProtKB"/>
</dbReference>
<dbReference type="GO" id="GO:0070498">
    <property type="term" value="P:interleukin-1-mediated signaling pathway"/>
    <property type="evidence" value="ECO:0000266"/>
    <property type="project" value="RGD"/>
</dbReference>
<dbReference type="GO" id="GO:0007611">
    <property type="term" value="P:learning or memory"/>
    <property type="evidence" value="ECO:0000315"/>
    <property type="project" value="RGD"/>
</dbReference>
<dbReference type="GO" id="GO:0045475">
    <property type="term" value="P:locomotor rhythm"/>
    <property type="evidence" value="ECO:0000250"/>
    <property type="project" value="UniProtKB"/>
</dbReference>
<dbReference type="GO" id="GO:0007616">
    <property type="term" value="P:long-term memory"/>
    <property type="evidence" value="ECO:0000315"/>
    <property type="project" value="RGD"/>
</dbReference>
<dbReference type="GO" id="GO:0060291">
    <property type="term" value="P:long-term synaptic potentiation"/>
    <property type="evidence" value="ECO:0000270"/>
    <property type="project" value="RGD"/>
</dbReference>
<dbReference type="GO" id="GO:0090090">
    <property type="term" value="P:negative regulation of canonical Wnt signaling pathway"/>
    <property type="evidence" value="ECO:0000266"/>
    <property type="project" value="RGD"/>
</dbReference>
<dbReference type="GO" id="GO:0000122">
    <property type="term" value="P:negative regulation of transcription by RNA polymerase II"/>
    <property type="evidence" value="ECO:0000266"/>
    <property type="project" value="RGD"/>
</dbReference>
<dbReference type="GO" id="GO:0048709">
    <property type="term" value="P:oligodendrocyte differentiation"/>
    <property type="evidence" value="ECO:0000270"/>
    <property type="project" value="RGD"/>
</dbReference>
<dbReference type="GO" id="GO:0032722">
    <property type="term" value="P:positive regulation of chemokine production"/>
    <property type="evidence" value="ECO:0000250"/>
    <property type="project" value="UniProtKB"/>
</dbReference>
<dbReference type="GO" id="GO:0045893">
    <property type="term" value="P:positive regulation of DNA-templated transcription"/>
    <property type="evidence" value="ECO:0000315"/>
    <property type="project" value="RGD"/>
</dbReference>
<dbReference type="GO" id="GO:0010628">
    <property type="term" value="P:positive regulation of gene expression"/>
    <property type="evidence" value="ECO:0000315"/>
    <property type="project" value="RGD"/>
</dbReference>
<dbReference type="GO" id="GO:0044029">
    <property type="term" value="P:positive regulation of gene expression via chromosomal CpG island demethylation"/>
    <property type="evidence" value="ECO:0000266"/>
    <property type="project" value="RGD"/>
</dbReference>
<dbReference type="GO" id="GO:0072303">
    <property type="term" value="P:positive regulation of glomerular metanephric mesangial cell proliferation"/>
    <property type="evidence" value="ECO:0000315"/>
    <property type="project" value="UniProtKB"/>
</dbReference>
<dbReference type="GO" id="GO:0046886">
    <property type="term" value="P:positive regulation of hormone biosynthetic process"/>
    <property type="evidence" value="ECO:0000250"/>
    <property type="project" value="UniProtKB"/>
</dbReference>
<dbReference type="GO" id="GO:0032731">
    <property type="term" value="P:positive regulation of interleukin-1 beta production"/>
    <property type="evidence" value="ECO:0000250"/>
    <property type="project" value="UniProtKB"/>
</dbReference>
<dbReference type="GO" id="GO:1902895">
    <property type="term" value="P:positive regulation of miRNA transcription"/>
    <property type="evidence" value="ECO:0000266"/>
    <property type="project" value="RGD"/>
</dbReference>
<dbReference type="GO" id="GO:0043525">
    <property type="term" value="P:positive regulation of neuron apoptotic process"/>
    <property type="evidence" value="ECO:0000315"/>
    <property type="project" value="RGD"/>
</dbReference>
<dbReference type="GO" id="GO:1901875">
    <property type="term" value="P:positive regulation of post-translational protein modification"/>
    <property type="evidence" value="ECO:0000266"/>
    <property type="project" value="RGD"/>
</dbReference>
<dbReference type="GO" id="GO:0014911">
    <property type="term" value="P:positive regulation of smooth muscle cell migration"/>
    <property type="evidence" value="ECO:0000315"/>
    <property type="project" value="RGD"/>
</dbReference>
<dbReference type="GO" id="GO:0048661">
    <property type="term" value="P:positive regulation of smooth muscle cell proliferation"/>
    <property type="evidence" value="ECO:0000315"/>
    <property type="project" value="RGD"/>
</dbReference>
<dbReference type="GO" id="GO:0045944">
    <property type="term" value="P:positive regulation of transcription by RNA polymerase II"/>
    <property type="evidence" value="ECO:0000314"/>
    <property type="project" value="RGD"/>
</dbReference>
<dbReference type="GO" id="GO:0042981">
    <property type="term" value="P:regulation of apoptotic process"/>
    <property type="evidence" value="ECO:0000266"/>
    <property type="project" value="RGD"/>
</dbReference>
<dbReference type="GO" id="GO:0006355">
    <property type="term" value="P:regulation of DNA-templated transcription"/>
    <property type="evidence" value="ECO:0000266"/>
    <property type="project" value="RGD"/>
</dbReference>
<dbReference type="GO" id="GO:0048169">
    <property type="term" value="P:regulation of long-term neuronal synaptic plasticity"/>
    <property type="evidence" value="ECO:0000315"/>
    <property type="project" value="RGD"/>
</dbReference>
<dbReference type="GO" id="GO:2000182">
    <property type="term" value="P:regulation of progesterone biosynthetic process"/>
    <property type="evidence" value="ECO:0000250"/>
    <property type="project" value="UniProtKB"/>
</dbReference>
<dbReference type="GO" id="GO:0033233">
    <property type="term" value="P:regulation of protein sumoylation"/>
    <property type="evidence" value="ECO:0000266"/>
    <property type="project" value="RGD"/>
</dbReference>
<dbReference type="GO" id="GO:0006357">
    <property type="term" value="P:regulation of transcription by RNA polymerase II"/>
    <property type="evidence" value="ECO:0000266"/>
    <property type="project" value="RGD"/>
</dbReference>
<dbReference type="GO" id="GO:0001975">
    <property type="term" value="P:response to amphetamine"/>
    <property type="evidence" value="ECO:0000270"/>
    <property type="project" value="RGD"/>
</dbReference>
<dbReference type="GO" id="GO:0034465">
    <property type="term" value="P:response to carbon monoxide"/>
    <property type="evidence" value="ECO:0000270"/>
    <property type="project" value="RGD"/>
</dbReference>
<dbReference type="GO" id="GO:0042220">
    <property type="term" value="P:response to cocaine"/>
    <property type="evidence" value="ECO:0000270"/>
    <property type="project" value="RGD"/>
</dbReference>
<dbReference type="GO" id="GO:0051602">
    <property type="term" value="P:response to electrical stimulus"/>
    <property type="evidence" value="ECO:0000270"/>
    <property type="project" value="RGD"/>
</dbReference>
<dbReference type="GO" id="GO:0045471">
    <property type="term" value="P:response to ethanol"/>
    <property type="evidence" value="ECO:0000270"/>
    <property type="project" value="RGD"/>
</dbReference>
<dbReference type="GO" id="GO:0032354">
    <property type="term" value="P:response to follicle-stimulating hormone"/>
    <property type="evidence" value="ECO:0000270"/>
    <property type="project" value="RGD"/>
</dbReference>
<dbReference type="GO" id="GO:0009749">
    <property type="term" value="P:response to glucose"/>
    <property type="evidence" value="ECO:0000266"/>
    <property type="project" value="RGD"/>
</dbReference>
<dbReference type="GO" id="GO:0034698">
    <property type="term" value="P:response to gonadotropin"/>
    <property type="evidence" value="ECO:0000270"/>
    <property type="project" value="RGD"/>
</dbReference>
<dbReference type="GO" id="GO:0001666">
    <property type="term" value="P:response to hypoxia"/>
    <property type="evidence" value="ECO:0000250"/>
    <property type="project" value="UniProtKB"/>
</dbReference>
<dbReference type="GO" id="GO:0032868">
    <property type="term" value="P:response to insulin"/>
    <property type="evidence" value="ECO:0000266"/>
    <property type="project" value="RGD"/>
</dbReference>
<dbReference type="GO" id="GO:0002931">
    <property type="term" value="P:response to ischemia"/>
    <property type="evidence" value="ECO:0000314"/>
    <property type="project" value="UniProtKB"/>
</dbReference>
<dbReference type="GO" id="GO:0043278">
    <property type="term" value="P:response to morphine"/>
    <property type="evidence" value="ECO:0000270"/>
    <property type="project" value="RGD"/>
</dbReference>
<dbReference type="GO" id="GO:0071873">
    <property type="term" value="P:response to norepinephrine"/>
    <property type="evidence" value="ECO:0000270"/>
    <property type="project" value="RGD"/>
</dbReference>
<dbReference type="GO" id="GO:0031667">
    <property type="term" value="P:response to nutrient levels"/>
    <property type="evidence" value="ECO:0000270"/>
    <property type="project" value="RGD"/>
</dbReference>
<dbReference type="GO" id="GO:0009410">
    <property type="term" value="P:response to xenobiotic stimulus"/>
    <property type="evidence" value="ECO:0000270"/>
    <property type="project" value="RGD"/>
</dbReference>
<dbReference type="GO" id="GO:0035914">
    <property type="term" value="P:skeletal muscle cell differentiation"/>
    <property type="evidence" value="ECO:0000266"/>
    <property type="project" value="RGD"/>
</dbReference>
<dbReference type="GO" id="GO:0030217">
    <property type="term" value="P:T cell differentiation"/>
    <property type="evidence" value="ECO:0000266"/>
    <property type="project" value="RGD"/>
</dbReference>
<dbReference type="FunFam" id="3.30.160.60:FF:000769">
    <property type="entry name" value="Early growth response 2b"/>
    <property type="match status" value="1"/>
</dbReference>
<dbReference type="FunFam" id="3.30.160.60:FF:000324">
    <property type="entry name" value="Early growth response protein 4"/>
    <property type="match status" value="1"/>
</dbReference>
<dbReference type="FunFam" id="3.30.160.60:FF:000419">
    <property type="entry name" value="Early growth response protein 4"/>
    <property type="match status" value="1"/>
</dbReference>
<dbReference type="Gene3D" id="3.30.160.60">
    <property type="entry name" value="Classic Zinc Finger"/>
    <property type="match status" value="3"/>
</dbReference>
<dbReference type="InterPro" id="IPR021839">
    <property type="entry name" value="EGR1_C"/>
</dbReference>
<dbReference type="InterPro" id="IPR021849">
    <property type="entry name" value="EGR_N"/>
</dbReference>
<dbReference type="InterPro" id="IPR036236">
    <property type="entry name" value="Znf_C2H2_sf"/>
</dbReference>
<dbReference type="InterPro" id="IPR013087">
    <property type="entry name" value="Znf_C2H2_type"/>
</dbReference>
<dbReference type="PANTHER" id="PTHR23235:SF42">
    <property type="entry name" value="EARLY GROWTH RESPONSE PROTEIN 1"/>
    <property type="match status" value="1"/>
</dbReference>
<dbReference type="PANTHER" id="PTHR23235">
    <property type="entry name" value="KRUEPPEL-LIKE TRANSCRIPTION FACTOR"/>
    <property type="match status" value="1"/>
</dbReference>
<dbReference type="Pfam" id="PF11914">
    <property type="entry name" value="DUF3432"/>
    <property type="match status" value="1"/>
</dbReference>
<dbReference type="Pfam" id="PF11928">
    <property type="entry name" value="DUF3446"/>
    <property type="match status" value="1"/>
</dbReference>
<dbReference type="Pfam" id="PF00096">
    <property type="entry name" value="zf-C2H2"/>
    <property type="match status" value="3"/>
</dbReference>
<dbReference type="SMART" id="SM00355">
    <property type="entry name" value="ZnF_C2H2"/>
    <property type="match status" value="3"/>
</dbReference>
<dbReference type="SUPFAM" id="SSF57667">
    <property type="entry name" value="beta-beta-alpha zinc fingers"/>
    <property type="match status" value="2"/>
</dbReference>
<dbReference type="PROSITE" id="PS00028">
    <property type="entry name" value="ZINC_FINGER_C2H2_1"/>
    <property type="match status" value="3"/>
</dbReference>
<dbReference type="PROSITE" id="PS50157">
    <property type="entry name" value="ZINC_FINGER_C2H2_2"/>
    <property type="match status" value="3"/>
</dbReference>
<gene>
    <name type="primary">Egr1</name>
</gene>
<name>EGR1_RAT</name>
<accession>P08154</accession>
<accession>Q53YM5</accession>